<name>Y1428_OCEIH</name>
<evidence type="ECO:0000255" key="1">
    <source>
        <dbReference type="HAMAP-Rule" id="MF_01560"/>
    </source>
</evidence>
<proteinExistence type="inferred from homology"/>
<reference key="1">
    <citation type="journal article" date="2002" name="Nucleic Acids Res.">
        <title>Genome sequence of Oceanobacillus iheyensis isolated from the Iheya Ridge and its unexpected adaptive capabilities to extreme environments.</title>
        <authorList>
            <person name="Takami H."/>
            <person name="Takaki Y."/>
            <person name="Uchiyama I."/>
        </authorList>
    </citation>
    <scope>NUCLEOTIDE SEQUENCE [LARGE SCALE GENOMIC DNA]</scope>
    <source>
        <strain>DSM 14371 / CIP 107618 / JCM 11309 / KCTC 3954 / HTE831</strain>
    </source>
</reference>
<feature type="chain" id="PRO_0000110650" description="UPF0358 protein OB1428">
    <location>
        <begin position="1"/>
        <end position="93"/>
    </location>
</feature>
<sequence>MPDLMIDHREKAHALLKADADKILRLIEVQIENLTMPQCPVYEDVLDTQMYGLSREIDFAVRLELISEIEGKALLENLEKKLNILHEASQNTL</sequence>
<protein>
    <recommendedName>
        <fullName evidence="1">UPF0358 protein OB1428</fullName>
    </recommendedName>
</protein>
<organism>
    <name type="scientific">Oceanobacillus iheyensis (strain DSM 14371 / CIP 107618 / JCM 11309 / KCTC 3954 / HTE831)</name>
    <dbReference type="NCBI Taxonomy" id="221109"/>
    <lineage>
        <taxon>Bacteria</taxon>
        <taxon>Bacillati</taxon>
        <taxon>Bacillota</taxon>
        <taxon>Bacilli</taxon>
        <taxon>Bacillales</taxon>
        <taxon>Bacillaceae</taxon>
        <taxon>Oceanobacillus</taxon>
    </lineage>
</organism>
<gene>
    <name type="ordered locus">OB1428</name>
</gene>
<comment type="similarity">
    <text evidence="1">Belongs to the UPF0358 family.</text>
</comment>
<accession>Q8ER84</accession>
<dbReference type="EMBL" id="BA000028">
    <property type="protein sequence ID" value="BAC13384.1"/>
    <property type="molecule type" value="Genomic_DNA"/>
</dbReference>
<dbReference type="RefSeq" id="WP_011065833.1">
    <property type="nucleotide sequence ID" value="NC_004193.1"/>
</dbReference>
<dbReference type="SMR" id="Q8ER84"/>
<dbReference type="STRING" id="221109.gene:10733668"/>
<dbReference type="KEGG" id="oih:OB1428"/>
<dbReference type="eggNOG" id="COG4838">
    <property type="taxonomic scope" value="Bacteria"/>
</dbReference>
<dbReference type="HOGENOM" id="CLU_160493_1_0_9"/>
<dbReference type="OrthoDB" id="2135235at2"/>
<dbReference type="PhylomeDB" id="Q8ER84"/>
<dbReference type="Proteomes" id="UP000000822">
    <property type="component" value="Chromosome"/>
</dbReference>
<dbReference type="Gene3D" id="1.10.287.750">
    <property type="entry name" value="SO2669-like"/>
    <property type="match status" value="1"/>
</dbReference>
<dbReference type="HAMAP" id="MF_01560">
    <property type="entry name" value="UPF0358"/>
    <property type="match status" value="1"/>
</dbReference>
<dbReference type="InterPro" id="IPR009983">
    <property type="entry name" value="UPF0358"/>
</dbReference>
<dbReference type="InterPro" id="IPR036270">
    <property type="entry name" value="UPF0358_sf"/>
</dbReference>
<dbReference type="NCBIfam" id="NF010187">
    <property type="entry name" value="PRK13666.1"/>
    <property type="match status" value="1"/>
</dbReference>
<dbReference type="Pfam" id="PF07408">
    <property type="entry name" value="DUF1507"/>
    <property type="match status" value="1"/>
</dbReference>
<dbReference type="SUPFAM" id="SSF140404">
    <property type="entry name" value="EF2458-like"/>
    <property type="match status" value="1"/>
</dbReference>
<keyword id="KW-1185">Reference proteome</keyword>